<keyword id="KW-0028">Amino-acid biosynthesis</keyword>
<keyword id="KW-0055">Arginine biosynthesis</keyword>
<keyword id="KW-0067">ATP-binding</keyword>
<keyword id="KW-0436">Ligase</keyword>
<keyword id="KW-0460">Magnesium</keyword>
<keyword id="KW-0464">Manganese</keyword>
<keyword id="KW-0479">Metal-binding</keyword>
<keyword id="KW-0547">Nucleotide-binding</keyword>
<keyword id="KW-0665">Pyrimidine biosynthesis</keyword>
<keyword id="KW-1185">Reference proteome</keyword>
<keyword id="KW-0677">Repeat</keyword>
<sequence length="1049" mass="117505">MRESVRKVLVIGSGPIKIAEAAEFDYSGSQALKALKEEGIETILVNSNVATVQTSRKFADKLYMIPVTWWAVEKVIERERPDGIMVGFGGQTALNVGVDLYNKGILQKYGVKVLGTPIEGIERALSREKFRETMINVGLPVPPSLSARSEEEALEKARQIGYPVMVRVSFNLGGRGSIVAWNEEELKRDIGRALSQSYIHEVLIEKYLHHWIELEYEVMRDKYGNSAVIACIENLDPMGVHTGESTVISPCQTLDNKEFQDMRFMSMDVAKSIDLVGECNVQFALDPKGYNYYVIETNPRMSRSSALASKATGYPLAYVSAKLALGYSLYEVLNKVSGSTCACFEPSLDYVVIKIPRWDLDKFENVEISLASEMKSVGEVMSIGRSFEESLQKAVRMLDIGEPGVVGGKIYFSKMTKEDALKNLKMRRPYWFLYAAKAFKEGATIDEVYEVTGINKFFLNKIKALVEFYEILRKQRNIDKDTLLQAKKLGFSDLQLAKALGVKESDIRKLREKWNIEPKVKQIDTLAGEWPAVTNYLYLTYNGTEDDIEFSEAGNKLLIIGAGGFRIGVSVEFDWSVVSLLDSSLKYFNDIAILNYNPETVSTDWDIARKLYFDEISVERVLDLIRKEKFTYVATFTGGQIGNNISKKLEEEGIRLLGTSGRSIDTAEDREKFSKLLDKLGIKQPEWISARSLEEVKEFISKVGYPVLIRPSYVLSGAAMKIVNNDLELMEYLKRATEVSPEHPVVISKYLNDAIEAEIDAAGDGKGVYGVVIEHVEEAGVHSGDATMSIPYRKLSSNVVNKMKENVHMIVRELEIKGPFNVQFVIKNNEPYIIELNLRASRSMPFSSKVVSKNIISLALDGILNGFGVDEFIELKPKSWGVKSPQFSWAQLKGAYPFLGPEMKSTGEAASLGTDFYDALLKSWLSSSPNKIPNKEGIALVYGTTNVEYLKIAAKNLIDYGITVYTLSEASIGIEEKSINDIIELIKNRKVEIVVTDGYLKHIDYEVRRIAVDYNIPIILNGRLGAEVTRAFSHPNVTYYEISEYGAGI</sequence>
<reference key="1">
    <citation type="journal article" date="2001" name="DNA Res.">
        <title>Complete genome sequence of an aerobic thermoacidophilic Crenarchaeon, Sulfolobus tokodaii strain7.</title>
        <authorList>
            <person name="Kawarabayasi Y."/>
            <person name="Hino Y."/>
            <person name="Horikawa H."/>
            <person name="Jin-no K."/>
            <person name="Takahashi M."/>
            <person name="Sekine M."/>
            <person name="Baba S."/>
            <person name="Ankai A."/>
            <person name="Kosugi H."/>
            <person name="Hosoyama A."/>
            <person name="Fukui S."/>
            <person name="Nagai Y."/>
            <person name="Nishijima K."/>
            <person name="Otsuka R."/>
            <person name="Nakazawa H."/>
            <person name="Takamiya M."/>
            <person name="Kato Y."/>
            <person name="Yoshizawa T."/>
            <person name="Tanaka T."/>
            <person name="Kudoh Y."/>
            <person name="Yamazaki J."/>
            <person name="Kushida N."/>
            <person name="Oguchi A."/>
            <person name="Aoki K."/>
            <person name="Masuda S."/>
            <person name="Yanagii M."/>
            <person name="Nishimura M."/>
            <person name="Yamagishi A."/>
            <person name="Oshima T."/>
            <person name="Kikuchi H."/>
        </authorList>
    </citation>
    <scope>NUCLEOTIDE SEQUENCE [LARGE SCALE GENOMIC DNA]</scope>
    <source>
        <strain>DSM 16993 / JCM 10545 / NBRC 100140 / 7</strain>
    </source>
</reference>
<organism>
    <name type="scientific">Sulfurisphaera tokodaii (strain DSM 16993 / JCM 10545 / NBRC 100140 / 7)</name>
    <name type="common">Sulfolobus tokodaii</name>
    <dbReference type="NCBI Taxonomy" id="273063"/>
    <lineage>
        <taxon>Archaea</taxon>
        <taxon>Thermoproteota</taxon>
        <taxon>Thermoprotei</taxon>
        <taxon>Sulfolobales</taxon>
        <taxon>Sulfolobaceae</taxon>
        <taxon>Sulfurisphaera</taxon>
    </lineage>
</organism>
<name>CARB_SULTO</name>
<accession>Q970U7</accession>
<proteinExistence type="inferred from homology"/>
<protein>
    <recommendedName>
        <fullName evidence="1">Carbamoyl phosphate synthase large chain</fullName>
        <ecNumber evidence="1">6.3.4.16</ecNumber>
        <ecNumber evidence="1">6.3.5.5</ecNumber>
    </recommendedName>
    <alternativeName>
        <fullName evidence="1">Carbamoyl phosphate synthetase ammonia chain</fullName>
    </alternativeName>
</protein>
<gene>
    <name evidence="1" type="primary">carB</name>
    <name type="ordered locus">STK_15040</name>
</gene>
<feature type="chain" id="PRO_0000145085" description="Carbamoyl phosphate synthase large chain">
    <location>
        <begin position="1"/>
        <end position="1049"/>
    </location>
</feature>
<feature type="domain" description="ATP-grasp 1" evidence="1">
    <location>
        <begin position="131"/>
        <end position="325"/>
    </location>
</feature>
<feature type="domain" description="ATP-grasp 2" evidence="1">
    <location>
        <begin position="674"/>
        <end position="864"/>
    </location>
</feature>
<feature type="domain" description="MGS-like" evidence="1">
    <location>
        <begin position="930"/>
        <end position="1049"/>
    </location>
</feature>
<feature type="region of interest" description="Carboxyphosphate synthetic domain" evidence="1">
    <location>
        <begin position="1"/>
        <end position="399"/>
    </location>
</feature>
<feature type="region of interest" description="Oligomerization domain" evidence="1">
    <location>
        <begin position="400"/>
        <end position="548"/>
    </location>
</feature>
<feature type="region of interest" description="Carbamoyl phosphate synthetic domain" evidence="1">
    <location>
        <begin position="549"/>
        <end position="930"/>
    </location>
</feature>
<feature type="region of interest" description="Allosteric domain" evidence="1">
    <location>
        <begin position="931"/>
        <end position="1049"/>
    </location>
</feature>
<feature type="binding site" evidence="1">
    <location>
        <position position="127"/>
    </location>
    <ligand>
        <name>ATP</name>
        <dbReference type="ChEBI" id="CHEBI:30616"/>
        <label>1</label>
    </ligand>
</feature>
<feature type="binding site" evidence="1">
    <location>
        <position position="167"/>
    </location>
    <ligand>
        <name>ATP</name>
        <dbReference type="ChEBI" id="CHEBI:30616"/>
        <label>1</label>
    </ligand>
</feature>
<feature type="binding site" evidence="1">
    <location>
        <position position="173"/>
    </location>
    <ligand>
        <name>ATP</name>
        <dbReference type="ChEBI" id="CHEBI:30616"/>
        <label>1</label>
    </ligand>
</feature>
<feature type="binding site" evidence="1">
    <location>
        <position position="174"/>
    </location>
    <ligand>
        <name>ATP</name>
        <dbReference type="ChEBI" id="CHEBI:30616"/>
        <label>1</label>
    </ligand>
</feature>
<feature type="binding site" evidence="1">
    <location>
        <position position="206"/>
    </location>
    <ligand>
        <name>ATP</name>
        <dbReference type="ChEBI" id="CHEBI:30616"/>
        <label>1</label>
    </ligand>
</feature>
<feature type="binding site" evidence="1">
    <location>
        <position position="208"/>
    </location>
    <ligand>
        <name>ATP</name>
        <dbReference type="ChEBI" id="CHEBI:30616"/>
        <label>1</label>
    </ligand>
</feature>
<feature type="binding site" evidence="1">
    <location>
        <position position="213"/>
    </location>
    <ligand>
        <name>ATP</name>
        <dbReference type="ChEBI" id="CHEBI:30616"/>
        <label>1</label>
    </ligand>
</feature>
<feature type="binding site" evidence="1">
    <location>
        <position position="239"/>
    </location>
    <ligand>
        <name>ATP</name>
        <dbReference type="ChEBI" id="CHEBI:30616"/>
        <label>1</label>
    </ligand>
</feature>
<feature type="binding site" evidence="1">
    <location>
        <position position="240"/>
    </location>
    <ligand>
        <name>ATP</name>
        <dbReference type="ChEBI" id="CHEBI:30616"/>
        <label>1</label>
    </ligand>
</feature>
<feature type="binding site" evidence="1">
    <location>
        <position position="241"/>
    </location>
    <ligand>
        <name>ATP</name>
        <dbReference type="ChEBI" id="CHEBI:30616"/>
        <label>1</label>
    </ligand>
</feature>
<feature type="binding site" evidence="1">
    <location>
        <position position="282"/>
    </location>
    <ligand>
        <name>ATP</name>
        <dbReference type="ChEBI" id="CHEBI:30616"/>
        <label>1</label>
    </ligand>
</feature>
<feature type="binding site" evidence="1">
    <location>
        <position position="282"/>
    </location>
    <ligand>
        <name>Mg(2+)</name>
        <dbReference type="ChEBI" id="CHEBI:18420"/>
        <label>1</label>
    </ligand>
</feature>
<feature type="binding site" evidence="1">
    <location>
        <position position="282"/>
    </location>
    <ligand>
        <name>Mn(2+)</name>
        <dbReference type="ChEBI" id="CHEBI:29035"/>
        <label>1</label>
    </ligand>
</feature>
<feature type="binding site" evidence="1">
    <location>
        <position position="296"/>
    </location>
    <ligand>
        <name>ATP</name>
        <dbReference type="ChEBI" id="CHEBI:30616"/>
        <label>1</label>
    </ligand>
</feature>
<feature type="binding site" evidence="1">
    <location>
        <position position="296"/>
    </location>
    <ligand>
        <name>Mg(2+)</name>
        <dbReference type="ChEBI" id="CHEBI:18420"/>
        <label>1</label>
    </ligand>
</feature>
<feature type="binding site" evidence="1">
    <location>
        <position position="296"/>
    </location>
    <ligand>
        <name>Mg(2+)</name>
        <dbReference type="ChEBI" id="CHEBI:18420"/>
        <label>2</label>
    </ligand>
</feature>
<feature type="binding site" evidence="1">
    <location>
        <position position="296"/>
    </location>
    <ligand>
        <name>Mn(2+)</name>
        <dbReference type="ChEBI" id="CHEBI:29035"/>
        <label>1</label>
    </ligand>
</feature>
<feature type="binding site" evidence="1">
    <location>
        <position position="296"/>
    </location>
    <ligand>
        <name>Mn(2+)</name>
        <dbReference type="ChEBI" id="CHEBI:29035"/>
        <label>2</label>
    </ligand>
</feature>
<feature type="binding site" evidence="1">
    <location>
        <position position="298"/>
    </location>
    <ligand>
        <name>Mg(2+)</name>
        <dbReference type="ChEBI" id="CHEBI:18420"/>
        <label>2</label>
    </ligand>
</feature>
<feature type="binding site" evidence="1">
    <location>
        <position position="298"/>
    </location>
    <ligand>
        <name>Mn(2+)</name>
        <dbReference type="ChEBI" id="CHEBI:29035"/>
        <label>2</label>
    </ligand>
</feature>
<feature type="binding site" evidence="1">
    <location>
        <position position="710"/>
    </location>
    <ligand>
        <name>ATP</name>
        <dbReference type="ChEBI" id="CHEBI:30616"/>
        <label>2</label>
    </ligand>
</feature>
<feature type="binding site" evidence="1">
    <location>
        <position position="749"/>
    </location>
    <ligand>
        <name>ATP</name>
        <dbReference type="ChEBI" id="CHEBI:30616"/>
        <label>2</label>
    </ligand>
</feature>
<feature type="binding site" evidence="1">
    <location>
        <position position="751"/>
    </location>
    <ligand>
        <name>ATP</name>
        <dbReference type="ChEBI" id="CHEBI:30616"/>
        <label>2</label>
    </ligand>
</feature>
<feature type="binding site" evidence="1">
    <location>
        <position position="756"/>
    </location>
    <ligand>
        <name>ATP</name>
        <dbReference type="ChEBI" id="CHEBI:30616"/>
        <label>2</label>
    </ligand>
</feature>
<feature type="binding site" evidence="1">
    <location>
        <position position="780"/>
    </location>
    <ligand>
        <name>ATP</name>
        <dbReference type="ChEBI" id="CHEBI:30616"/>
        <label>2</label>
    </ligand>
</feature>
<feature type="binding site" evidence="1">
    <location>
        <position position="781"/>
    </location>
    <ligand>
        <name>ATP</name>
        <dbReference type="ChEBI" id="CHEBI:30616"/>
        <label>2</label>
    </ligand>
</feature>
<feature type="binding site" evidence="1">
    <location>
        <position position="782"/>
    </location>
    <ligand>
        <name>ATP</name>
        <dbReference type="ChEBI" id="CHEBI:30616"/>
        <label>2</label>
    </ligand>
</feature>
<feature type="binding site" evidence="1">
    <location>
        <position position="783"/>
    </location>
    <ligand>
        <name>ATP</name>
        <dbReference type="ChEBI" id="CHEBI:30616"/>
        <label>2</label>
    </ligand>
</feature>
<feature type="binding site" evidence="1">
    <location>
        <position position="823"/>
    </location>
    <ligand>
        <name>ATP</name>
        <dbReference type="ChEBI" id="CHEBI:30616"/>
        <label>2</label>
    </ligand>
</feature>
<feature type="binding site" evidence="1">
    <location>
        <position position="823"/>
    </location>
    <ligand>
        <name>Mg(2+)</name>
        <dbReference type="ChEBI" id="CHEBI:18420"/>
        <label>3</label>
    </ligand>
</feature>
<feature type="binding site" evidence="1">
    <location>
        <position position="823"/>
    </location>
    <ligand>
        <name>Mn(2+)</name>
        <dbReference type="ChEBI" id="CHEBI:29035"/>
        <label>3</label>
    </ligand>
</feature>
<feature type="binding site" evidence="1">
    <location>
        <position position="835"/>
    </location>
    <ligand>
        <name>ATP</name>
        <dbReference type="ChEBI" id="CHEBI:30616"/>
        <label>2</label>
    </ligand>
</feature>
<feature type="binding site" evidence="1">
    <location>
        <position position="835"/>
    </location>
    <ligand>
        <name>Mg(2+)</name>
        <dbReference type="ChEBI" id="CHEBI:18420"/>
        <label>3</label>
    </ligand>
</feature>
<feature type="binding site" evidence="1">
    <location>
        <position position="835"/>
    </location>
    <ligand>
        <name>Mg(2+)</name>
        <dbReference type="ChEBI" id="CHEBI:18420"/>
        <label>4</label>
    </ligand>
</feature>
<feature type="binding site" evidence="1">
    <location>
        <position position="835"/>
    </location>
    <ligand>
        <name>Mn(2+)</name>
        <dbReference type="ChEBI" id="CHEBI:29035"/>
        <label>3</label>
    </ligand>
</feature>
<feature type="binding site" evidence="1">
    <location>
        <position position="835"/>
    </location>
    <ligand>
        <name>Mn(2+)</name>
        <dbReference type="ChEBI" id="CHEBI:29035"/>
        <label>4</label>
    </ligand>
</feature>
<feature type="binding site" evidence="1">
    <location>
        <position position="837"/>
    </location>
    <ligand>
        <name>Mg(2+)</name>
        <dbReference type="ChEBI" id="CHEBI:18420"/>
        <label>4</label>
    </ligand>
</feature>
<feature type="binding site" evidence="1">
    <location>
        <position position="837"/>
    </location>
    <ligand>
        <name>Mn(2+)</name>
        <dbReference type="ChEBI" id="CHEBI:29035"/>
        <label>4</label>
    </ligand>
</feature>
<comment type="function">
    <text evidence="1">Large subunit of the glutamine-dependent carbamoyl phosphate synthetase (CPSase). CPSase catalyzes the formation of carbamoyl phosphate from the ammonia moiety of glutamine, carbonate, and phosphate donated by ATP, constituting the first step of 2 biosynthetic pathways, one leading to arginine and/or urea and the other to pyrimidine nucleotides. The large subunit (synthetase) binds the substrates ammonia (free or transferred from glutamine from the small subunit), hydrogencarbonate and ATP and carries out an ATP-coupled ligase reaction, activating hydrogencarbonate by forming carboxy phosphate which reacts with ammonia to form carbamoyl phosphate.</text>
</comment>
<comment type="catalytic activity">
    <reaction evidence="1">
        <text>hydrogencarbonate + L-glutamine + 2 ATP + H2O = carbamoyl phosphate + L-glutamate + 2 ADP + phosphate + 2 H(+)</text>
        <dbReference type="Rhea" id="RHEA:18633"/>
        <dbReference type="ChEBI" id="CHEBI:15377"/>
        <dbReference type="ChEBI" id="CHEBI:15378"/>
        <dbReference type="ChEBI" id="CHEBI:17544"/>
        <dbReference type="ChEBI" id="CHEBI:29985"/>
        <dbReference type="ChEBI" id="CHEBI:30616"/>
        <dbReference type="ChEBI" id="CHEBI:43474"/>
        <dbReference type="ChEBI" id="CHEBI:58228"/>
        <dbReference type="ChEBI" id="CHEBI:58359"/>
        <dbReference type="ChEBI" id="CHEBI:456216"/>
        <dbReference type="EC" id="6.3.5.5"/>
    </reaction>
</comment>
<comment type="catalytic activity">
    <molecule>Carbamoyl phosphate synthase large chain</molecule>
    <reaction evidence="1">
        <text>hydrogencarbonate + NH4(+) + 2 ATP = carbamoyl phosphate + 2 ADP + phosphate + 2 H(+)</text>
        <dbReference type="Rhea" id="RHEA:18029"/>
        <dbReference type="ChEBI" id="CHEBI:15378"/>
        <dbReference type="ChEBI" id="CHEBI:17544"/>
        <dbReference type="ChEBI" id="CHEBI:28938"/>
        <dbReference type="ChEBI" id="CHEBI:30616"/>
        <dbReference type="ChEBI" id="CHEBI:43474"/>
        <dbReference type="ChEBI" id="CHEBI:58228"/>
        <dbReference type="ChEBI" id="CHEBI:456216"/>
        <dbReference type="EC" id="6.3.4.16"/>
    </reaction>
</comment>
<comment type="cofactor">
    <cofactor evidence="1">
        <name>Mg(2+)</name>
        <dbReference type="ChEBI" id="CHEBI:18420"/>
    </cofactor>
    <cofactor evidence="1">
        <name>Mn(2+)</name>
        <dbReference type="ChEBI" id="CHEBI:29035"/>
    </cofactor>
    <text evidence="1">Binds 4 Mg(2+) or Mn(2+) ions per subunit.</text>
</comment>
<comment type="pathway">
    <text evidence="1">Amino-acid biosynthesis; L-arginine biosynthesis; carbamoyl phosphate from bicarbonate: step 1/1.</text>
</comment>
<comment type="pathway">
    <text evidence="1">Pyrimidine metabolism; UMP biosynthesis via de novo pathway; (S)-dihydroorotate from bicarbonate: step 1/3.</text>
</comment>
<comment type="subunit">
    <text evidence="1">Composed of two chains; the small (or glutamine) chain promotes the hydrolysis of glutamine to ammonia, which is used by the large (or ammonia) chain to synthesize carbamoyl phosphate. Tetramer of heterodimers (alpha,beta)4.</text>
</comment>
<comment type="domain">
    <text evidence="1">The large subunit is composed of 2 ATP-grasp domains that are involved in binding the 2 ATP molecules needed for carbamoyl phosphate synthesis. The N-terminal ATP-grasp domain (referred to as the carboxyphosphate synthetic component) catalyzes the ATP-dependent phosphorylation of hydrogencarbonate to carboxyphosphate and the subsequent nucleophilic attack by ammonia to form a carbamate intermediate. The C-terminal ATP-grasp domain (referred to as the carbamoyl phosphate synthetic component) then catalyzes the phosphorylation of carbamate with the second ATP to form the end product carbamoyl phosphate. The reactive and unstable enzyme intermediates are sequentially channeled from one active site to the next through the interior of the protein over a distance of at least 96 A.</text>
</comment>
<comment type="similarity">
    <text evidence="1">Belongs to the CarB family.</text>
</comment>
<dbReference type="EC" id="6.3.4.16" evidence="1"/>
<dbReference type="EC" id="6.3.5.5" evidence="1"/>
<dbReference type="EMBL" id="BA000023">
    <property type="protein sequence ID" value="BAB66576.1"/>
    <property type="molecule type" value="Genomic_DNA"/>
</dbReference>
<dbReference type="RefSeq" id="WP_010979554.1">
    <property type="nucleotide sequence ID" value="NC_003106.2"/>
</dbReference>
<dbReference type="SMR" id="Q970U7"/>
<dbReference type="STRING" id="273063.STK_15040"/>
<dbReference type="GeneID" id="1459540"/>
<dbReference type="KEGG" id="sto:STK_15040"/>
<dbReference type="PATRIC" id="fig|273063.9.peg.1712"/>
<dbReference type="eggNOG" id="arCOG01594">
    <property type="taxonomic scope" value="Archaea"/>
</dbReference>
<dbReference type="OrthoDB" id="85487at2157"/>
<dbReference type="UniPathway" id="UPA00068">
    <property type="reaction ID" value="UER00171"/>
</dbReference>
<dbReference type="UniPathway" id="UPA00070">
    <property type="reaction ID" value="UER00115"/>
</dbReference>
<dbReference type="Proteomes" id="UP000001015">
    <property type="component" value="Chromosome"/>
</dbReference>
<dbReference type="GO" id="GO:0005737">
    <property type="term" value="C:cytoplasm"/>
    <property type="evidence" value="ECO:0007669"/>
    <property type="project" value="TreeGrafter"/>
</dbReference>
<dbReference type="GO" id="GO:0005524">
    <property type="term" value="F:ATP binding"/>
    <property type="evidence" value="ECO:0007669"/>
    <property type="project" value="UniProtKB-UniRule"/>
</dbReference>
<dbReference type="GO" id="GO:0004087">
    <property type="term" value="F:carbamoyl-phosphate synthase (ammonia) activity"/>
    <property type="evidence" value="ECO:0007669"/>
    <property type="project" value="RHEA"/>
</dbReference>
<dbReference type="GO" id="GO:0004088">
    <property type="term" value="F:carbamoyl-phosphate synthase (glutamine-hydrolyzing) activity"/>
    <property type="evidence" value="ECO:0007669"/>
    <property type="project" value="UniProtKB-UniRule"/>
</dbReference>
<dbReference type="GO" id="GO:0046872">
    <property type="term" value="F:metal ion binding"/>
    <property type="evidence" value="ECO:0007669"/>
    <property type="project" value="UniProtKB-KW"/>
</dbReference>
<dbReference type="GO" id="GO:0044205">
    <property type="term" value="P:'de novo' UMP biosynthetic process"/>
    <property type="evidence" value="ECO:0007669"/>
    <property type="project" value="UniProtKB-UniRule"/>
</dbReference>
<dbReference type="GO" id="GO:0006541">
    <property type="term" value="P:glutamine metabolic process"/>
    <property type="evidence" value="ECO:0007669"/>
    <property type="project" value="TreeGrafter"/>
</dbReference>
<dbReference type="GO" id="GO:0006526">
    <property type="term" value="P:L-arginine biosynthetic process"/>
    <property type="evidence" value="ECO:0007669"/>
    <property type="project" value="UniProtKB-UniRule"/>
</dbReference>
<dbReference type="FunFam" id="1.10.1030.10:FF:000002">
    <property type="entry name" value="Carbamoyl-phosphate synthase large chain"/>
    <property type="match status" value="1"/>
</dbReference>
<dbReference type="FunFam" id="3.30.1490.20:FF:000001">
    <property type="entry name" value="Carbamoyl-phosphate synthase large chain"/>
    <property type="match status" value="1"/>
</dbReference>
<dbReference type="FunFam" id="3.30.470.20:FF:000001">
    <property type="entry name" value="Carbamoyl-phosphate synthase large chain"/>
    <property type="match status" value="1"/>
</dbReference>
<dbReference type="FunFam" id="3.30.470.20:FF:000026">
    <property type="entry name" value="Carbamoyl-phosphate synthase large chain"/>
    <property type="match status" value="1"/>
</dbReference>
<dbReference type="FunFam" id="3.40.50.20:FF:000001">
    <property type="entry name" value="Carbamoyl-phosphate synthase large chain"/>
    <property type="match status" value="2"/>
</dbReference>
<dbReference type="Gene3D" id="3.40.50.20">
    <property type="match status" value="2"/>
</dbReference>
<dbReference type="Gene3D" id="3.30.1490.20">
    <property type="entry name" value="ATP-grasp fold, A domain"/>
    <property type="match status" value="1"/>
</dbReference>
<dbReference type="Gene3D" id="3.30.470.20">
    <property type="entry name" value="ATP-grasp fold, B domain"/>
    <property type="match status" value="2"/>
</dbReference>
<dbReference type="Gene3D" id="1.10.1030.10">
    <property type="entry name" value="Carbamoyl-phosphate synthetase, large subunit oligomerisation domain"/>
    <property type="match status" value="1"/>
</dbReference>
<dbReference type="HAMAP" id="MF_01210_A">
    <property type="entry name" value="CPSase_L_chain_A"/>
    <property type="match status" value="1"/>
</dbReference>
<dbReference type="InterPro" id="IPR011761">
    <property type="entry name" value="ATP-grasp"/>
</dbReference>
<dbReference type="InterPro" id="IPR013815">
    <property type="entry name" value="ATP_grasp_subdomain_1"/>
</dbReference>
<dbReference type="InterPro" id="IPR006275">
    <property type="entry name" value="CarbamoylP_synth_lsu"/>
</dbReference>
<dbReference type="InterPro" id="IPR005480">
    <property type="entry name" value="CarbamoylP_synth_lsu_oligo"/>
</dbReference>
<dbReference type="InterPro" id="IPR036897">
    <property type="entry name" value="CarbamoylP_synth_lsu_oligo_sf"/>
</dbReference>
<dbReference type="InterPro" id="IPR005479">
    <property type="entry name" value="CbamoylP_synth_lsu-like_ATP-bd"/>
</dbReference>
<dbReference type="InterPro" id="IPR005483">
    <property type="entry name" value="CbamoylP_synth_lsu_CPSase_dom"/>
</dbReference>
<dbReference type="InterPro" id="IPR011607">
    <property type="entry name" value="MGS-like_dom"/>
</dbReference>
<dbReference type="InterPro" id="IPR016185">
    <property type="entry name" value="PreATP-grasp_dom_sf"/>
</dbReference>
<dbReference type="NCBIfam" id="TIGR01369">
    <property type="entry name" value="CPSaseII_lrg"/>
    <property type="match status" value="1"/>
</dbReference>
<dbReference type="NCBIfam" id="NF003671">
    <property type="entry name" value="PRK05294.1"/>
    <property type="match status" value="1"/>
</dbReference>
<dbReference type="NCBIfam" id="NF009455">
    <property type="entry name" value="PRK12815.1"/>
    <property type="match status" value="1"/>
</dbReference>
<dbReference type="PANTHER" id="PTHR11405:SF53">
    <property type="entry name" value="CARBAMOYL-PHOSPHATE SYNTHASE [AMMONIA], MITOCHONDRIAL"/>
    <property type="match status" value="1"/>
</dbReference>
<dbReference type="PANTHER" id="PTHR11405">
    <property type="entry name" value="CARBAMOYLTRANSFERASE FAMILY MEMBER"/>
    <property type="match status" value="1"/>
</dbReference>
<dbReference type="Pfam" id="PF02786">
    <property type="entry name" value="CPSase_L_D2"/>
    <property type="match status" value="2"/>
</dbReference>
<dbReference type="Pfam" id="PF02787">
    <property type="entry name" value="CPSase_L_D3"/>
    <property type="match status" value="1"/>
</dbReference>
<dbReference type="PRINTS" id="PR00098">
    <property type="entry name" value="CPSASE"/>
</dbReference>
<dbReference type="SMART" id="SM01096">
    <property type="entry name" value="CPSase_L_D3"/>
    <property type="match status" value="1"/>
</dbReference>
<dbReference type="SUPFAM" id="SSF48108">
    <property type="entry name" value="Carbamoyl phosphate synthetase, large subunit connection domain"/>
    <property type="match status" value="1"/>
</dbReference>
<dbReference type="SUPFAM" id="SSF56059">
    <property type="entry name" value="Glutathione synthetase ATP-binding domain-like"/>
    <property type="match status" value="2"/>
</dbReference>
<dbReference type="SUPFAM" id="SSF52440">
    <property type="entry name" value="PreATP-grasp domain"/>
    <property type="match status" value="2"/>
</dbReference>
<dbReference type="PROSITE" id="PS50975">
    <property type="entry name" value="ATP_GRASP"/>
    <property type="match status" value="2"/>
</dbReference>
<dbReference type="PROSITE" id="PS00866">
    <property type="entry name" value="CPSASE_1"/>
    <property type="match status" value="1"/>
</dbReference>
<dbReference type="PROSITE" id="PS00867">
    <property type="entry name" value="CPSASE_2"/>
    <property type="match status" value="1"/>
</dbReference>
<dbReference type="PROSITE" id="PS51855">
    <property type="entry name" value="MGS"/>
    <property type="match status" value="1"/>
</dbReference>
<evidence type="ECO:0000255" key="1">
    <source>
        <dbReference type="HAMAP-Rule" id="MF_01210"/>
    </source>
</evidence>